<evidence type="ECO:0000255" key="1">
    <source>
        <dbReference type="HAMAP-Rule" id="MF_00365"/>
    </source>
</evidence>
<sequence length="376" mass="40525">MYVRRLELVDFRSYERVGVDLEPGANVLVGHNGVGKTNLIEALGYVATLDSHRVATDAPLVRMGAGAAVIRCAVVHEGRELLIELEIVPGRANRARLGRSPARRARDVLGALRLVLFAPEDLELVRGDPAERRRYLDDLLVLRQPRYAGVRADYERVVRQRNALLRTAYLARKTGGTRGGDLSTLAVWDDHLARHGAELLAGRLDLVAALAPHVTRAYDAVAAGTGAAGIAYRPSVELPTPTTDRADLTAALSAALAAGRSAEIERGTTLVGPHRDDLTLTLGPLPAKGYASHGESWSLALALRLAGYDLLRVDGIEPVLVLDDVFAELDTGRRDRLAQLVGDASQLLVTCAVEEDVPARLRGARFVVRGGEVHRA</sequence>
<keyword id="KW-0067">ATP-binding</keyword>
<keyword id="KW-0963">Cytoplasm</keyword>
<keyword id="KW-0227">DNA damage</keyword>
<keyword id="KW-0234">DNA repair</keyword>
<keyword id="KW-0235">DNA replication</keyword>
<keyword id="KW-0238">DNA-binding</keyword>
<keyword id="KW-0547">Nucleotide-binding</keyword>
<keyword id="KW-0742">SOS response</keyword>
<name>RECF_SALAI</name>
<organism>
    <name type="scientific">Salinispora arenicola (strain CNS-205)</name>
    <dbReference type="NCBI Taxonomy" id="391037"/>
    <lineage>
        <taxon>Bacteria</taxon>
        <taxon>Bacillati</taxon>
        <taxon>Actinomycetota</taxon>
        <taxon>Actinomycetes</taxon>
        <taxon>Micromonosporales</taxon>
        <taxon>Micromonosporaceae</taxon>
        <taxon>Salinispora</taxon>
    </lineage>
</organism>
<accession>A8LVH1</accession>
<protein>
    <recommendedName>
        <fullName evidence="1">DNA replication and repair protein RecF</fullName>
    </recommendedName>
</protein>
<comment type="function">
    <text evidence="1">The RecF protein is involved in DNA metabolism; it is required for DNA replication and normal SOS inducibility. RecF binds preferentially to single-stranded, linear DNA. It also seems to bind ATP.</text>
</comment>
<comment type="subcellular location">
    <subcellularLocation>
        <location evidence="1">Cytoplasm</location>
    </subcellularLocation>
</comment>
<comment type="similarity">
    <text evidence="1">Belongs to the RecF family.</text>
</comment>
<reference key="1">
    <citation type="submission" date="2007-10" db="EMBL/GenBank/DDBJ databases">
        <title>Complete sequence of Salinispora arenicola CNS-205.</title>
        <authorList>
            <consortium name="US DOE Joint Genome Institute"/>
            <person name="Copeland A."/>
            <person name="Lucas S."/>
            <person name="Lapidus A."/>
            <person name="Barry K."/>
            <person name="Glavina del Rio T."/>
            <person name="Dalin E."/>
            <person name="Tice H."/>
            <person name="Pitluck S."/>
            <person name="Foster B."/>
            <person name="Schmutz J."/>
            <person name="Larimer F."/>
            <person name="Land M."/>
            <person name="Hauser L."/>
            <person name="Kyrpides N."/>
            <person name="Ivanova N."/>
            <person name="Jensen P.R."/>
            <person name="Moore B.S."/>
            <person name="Penn K."/>
            <person name="Jenkins C."/>
            <person name="Udwary D."/>
            <person name="Xiang L."/>
            <person name="Gontang E."/>
            <person name="Richardson P."/>
        </authorList>
    </citation>
    <scope>NUCLEOTIDE SEQUENCE [LARGE SCALE GENOMIC DNA]</scope>
    <source>
        <strain>CNS-205</strain>
    </source>
</reference>
<proteinExistence type="inferred from homology"/>
<gene>
    <name evidence="1" type="primary">recF</name>
    <name type="ordered locus">Sare_0004</name>
</gene>
<feature type="chain" id="PRO_1000079600" description="DNA replication and repair protein RecF">
    <location>
        <begin position="1"/>
        <end position="376"/>
    </location>
</feature>
<feature type="binding site" evidence="1">
    <location>
        <begin position="30"/>
        <end position="37"/>
    </location>
    <ligand>
        <name>ATP</name>
        <dbReference type="ChEBI" id="CHEBI:30616"/>
    </ligand>
</feature>
<dbReference type="EMBL" id="CP000850">
    <property type="protein sequence ID" value="ABV95940.1"/>
    <property type="molecule type" value="Genomic_DNA"/>
</dbReference>
<dbReference type="SMR" id="A8LVH1"/>
<dbReference type="STRING" id="391037.Sare_0004"/>
<dbReference type="KEGG" id="saq:Sare_0004"/>
<dbReference type="PATRIC" id="fig|391037.6.peg.4"/>
<dbReference type="eggNOG" id="COG1195">
    <property type="taxonomic scope" value="Bacteria"/>
</dbReference>
<dbReference type="HOGENOM" id="CLU_040267_1_1_11"/>
<dbReference type="OrthoDB" id="9803889at2"/>
<dbReference type="GO" id="GO:0005737">
    <property type="term" value="C:cytoplasm"/>
    <property type="evidence" value="ECO:0007669"/>
    <property type="project" value="UniProtKB-SubCell"/>
</dbReference>
<dbReference type="GO" id="GO:0005524">
    <property type="term" value="F:ATP binding"/>
    <property type="evidence" value="ECO:0007669"/>
    <property type="project" value="UniProtKB-UniRule"/>
</dbReference>
<dbReference type="GO" id="GO:0003697">
    <property type="term" value="F:single-stranded DNA binding"/>
    <property type="evidence" value="ECO:0007669"/>
    <property type="project" value="UniProtKB-UniRule"/>
</dbReference>
<dbReference type="GO" id="GO:0006260">
    <property type="term" value="P:DNA replication"/>
    <property type="evidence" value="ECO:0007669"/>
    <property type="project" value="UniProtKB-UniRule"/>
</dbReference>
<dbReference type="GO" id="GO:0000731">
    <property type="term" value="P:DNA synthesis involved in DNA repair"/>
    <property type="evidence" value="ECO:0007669"/>
    <property type="project" value="TreeGrafter"/>
</dbReference>
<dbReference type="GO" id="GO:0006302">
    <property type="term" value="P:double-strand break repair"/>
    <property type="evidence" value="ECO:0007669"/>
    <property type="project" value="TreeGrafter"/>
</dbReference>
<dbReference type="GO" id="GO:0009432">
    <property type="term" value="P:SOS response"/>
    <property type="evidence" value="ECO:0007669"/>
    <property type="project" value="UniProtKB-UniRule"/>
</dbReference>
<dbReference type="Gene3D" id="3.40.50.300">
    <property type="entry name" value="P-loop containing nucleotide triphosphate hydrolases"/>
    <property type="match status" value="1"/>
</dbReference>
<dbReference type="Gene3D" id="1.20.1050.90">
    <property type="entry name" value="RecF/RecN/SMC, N-terminal domain"/>
    <property type="match status" value="1"/>
</dbReference>
<dbReference type="HAMAP" id="MF_00365">
    <property type="entry name" value="RecF"/>
    <property type="match status" value="1"/>
</dbReference>
<dbReference type="InterPro" id="IPR001238">
    <property type="entry name" value="DNA-binding_RecF"/>
</dbReference>
<dbReference type="InterPro" id="IPR018078">
    <property type="entry name" value="DNA-binding_RecF_CS"/>
</dbReference>
<dbReference type="InterPro" id="IPR027417">
    <property type="entry name" value="P-loop_NTPase"/>
</dbReference>
<dbReference type="InterPro" id="IPR003395">
    <property type="entry name" value="RecF/RecN/SMC_N"/>
</dbReference>
<dbReference type="InterPro" id="IPR042174">
    <property type="entry name" value="RecF_2"/>
</dbReference>
<dbReference type="NCBIfam" id="TIGR00611">
    <property type="entry name" value="recf"/>
    <property type="match status" value="1"/>
</dbReference>
<dbReference type="PANTHER" id="PTHR32182">
    <property type="entry name" value="DNA REPLICATION AND REPAIR PROTEIN RECF"/>
    <property type="match status" value="1"/>
</dbReference>
<dbReference type="PANTHER" id="PTHR32182:SF0">
    <property type="entry name" value="DNA REPLICATION AND REPAIR PROTEIN RECF"/>
    <property type="match status" value="1"/>
</dbReference>
<dbReference type="Pfam" id="PF02463">
    <property type="entry name" value="SMC_N"/>
    <property type="match status" value="1"/>
</dbReference>
<dbReference type="SUPFAM" id="SSF52540">
    <property type="entry name" value="P-loop containing nucleoside triphosphate hydrolases"/>
    <property type="match status" value="1"/>
</dbReference>
<dbReference type="PROSITE" id="PS00617">
    <property type="entry name" value="RECF_1"/>
    <property type="match status" value="1"/>
</dbReference>
<dbReference type="PROSITE" id="PS00618">
    <property type="entry name" value="RECF_2"/>
    <property type="match status" value="1"/>
</dbReference>